<feature type="chain" id="PRO_0000237553" description="L-lactate dehydrogenase">
    <location>
        <begin position="1"/>
        <end position="315"/>
    </location>
</feature>
<feature type="active site" description="Proton acceptor" evidence="1">
    <location>
        <position position="176"/>
    </location>
</feature>
<feature type="binding site" evidence="1">
    <location>
        <position position="14"/>
    </location>
    <ligand>
        <name>NAD(+)</name>
        <dbReference type="ChEBI" id="CHEBI:57540"/>
    </ligand>
</feature>
<feature type="binding site" evidence="1">
    <location>
        <position position="35"/>
    </location>
    <ligand>
        <name>NAD(+)</name>
        <dbReference type="ChEBI" id="CHEBI:57540"/>
    </ligand>
</feature>
<feature type="binding site" evidence="1">
    <location>
        <position position="66"/>
    </location>
    <ligand>
        <name>NAD(+)</name>
        <dbReference type="ChEBI" id="CHEBI:57540"/>
    </ligand>
</feature>
<feature type="binding site" evidence="1">
    <location>
        <position position="83"/>
    </location>
    <ligand>
        <name>substrate</name>
    </ligand>
</feature>
<feature type="binding site" evidence="1">
    <location>
        <position position="89"/>
    </location>
    <ligand>
        <name>substrate</name>
    </ligand>
</feature>
<feature type="binding site" evidence="1">
    <location>
        <begin position="119"/>
        <end position="121"/>
    </location>
    <ligand>
        <name>NAD(+)</name>
        <dbReference type="ChEBI" id="CHEBI:57540"/>
    </ligand>
</feature>
<feature type="binding site" evidence="1">
    <location>
        <begin position="121"/>
        <end position="124"/>
    </location>
    <ligand>
        <name>substrate</name>
    </ligand>
</feature>
<feature type="binding site" evidence="1">
    <location>
        <position position="144"/>
    </location>
    <ligand>
        <name>NAD(+)</name>
        <dbReference type="ChEBI" id="CHEBI:57540"/>
    </ligand>
</feature>
<feature type="binding site" evidence="1">
    <location>
        <begin position="149"/>
        <end position="152"/>
    </location>
    <ligand>
        <name>substrate</name>
    </ligand>
</feature>
<feature type="binding site" evidence="1">
    <location>
        <position position="230"/>
    </location>
    <ligand>
        <name>substrate</name>
    </ligand>
</feature>
<feature type="modified residue" description="Phosphotyrosine" evidence="1">
    <location>
        <position position="221"/>
    </location>
</feature>
<name>LDH_MESH7</name>
<reference key="1">
    <citation type="journal article" date="2005" name="J. Bacteriol.">
        <title>Swine and poultry pathogens: the complete genome sequences of two strains of Mycoplasma hyopneumoniae and a strain of Mycoplasma synoviae.</title>
        <authorList>
            <person name="Vasconcelos A.T.R."/>
            <person name="Ferreira H.B."/>
            <person name="Bizarro C.V."/>
            <person name="Bonatto S.L."/>
            <person name="Carvalho M.O."/>
            <person name="Pinto P.M."/>
            <person name="Almeida D.F."/>
            <person name="Almeida L.G.P."/>
            <person name="Almeida R."/>
            <person name="Alves-Junior L."/>
            <person name="Assuncao E.N."/>
            <person name="Azevedo V.A.C."/>
            <person name="Bogo M.R."/>
            <person name="Brigido M.M."/>
            <person name="Brocchi M."/>
            <person name="Burity H.A."/>
            <person name="Camargo A.A."/>
            <person name="Camargo S.S."/>
            <person name="Carepo M.S."/>
            <person name="Carraro D.M."/>
            <person name="de Mattos Cascardo J.C."/>
            <person name="Castro L.A."/>
            <person name="Cavalcanti G."/>
            <person name="Chemale G."/>
            <person name="Collevatti R.G."/>
            <person name="Cunha C.W."/>
            <person name="Dallagiovanna B."/>
            <person name="Dambros B.P."/>
            <person name="Dellagostin O.A."/>
            <person name="Falcao C."/>
            <person name="Fantinatti-Garboggini F."/>
            <person name="Felipe M.S.S."/>
            <person name="Fiorentin L."/>
            <person name="Franco G.R."/>
            <person name="Freitas N.S.A."/>
            <person name="Frias D."/>
            <person name="Grangeiro T.B."/>
            <person name="Grisard E.C."/>
            <person name="Guimaraes C.T."/>
            <person name="Hungria M."/>
            <person name="Jardim S.N."/>
            <person name="Krieger M.A."/>
            <person name="Laurino J.P."/>
            <person name="Lima L.F.A."/>
            <person name="Lopes M.I."/>
            <person name="Loreto E.L.S."/>
            <person name="Madeira H.M.F."/>
            <person name="Manfio G.P."/>
            <person name="Maranhao A.Q."/>
            <person name="Martinkovics C.T."/>
            <person name="Medeiros S.R.B."/>
            <person name="Moreira M.A.M."/>
            <person name="Neiva M."/>
            <person name="Ramalho-Neto C.E."/>
            <person name="Nicolas M.F."/>
            <person name="Oliveira S.C."/>
            <person name="Paixao R.F.C."/>
            <person name="Pedrosa F.O."/>
            <person name="Pena S.D.J."/>
            <person name="Pereira M."/>
            <person name="Pereira-Ferrari L."/>
            <person name="Piffer I."/>
            <person name="Pinto L.S."/>
            <person name="Potrich D.P."/>
            <person name="Salim A.C.M."/>
            <person name="Santos F.R."/>
            <person name="Schmitt R."/>
            <person name="Schneider M.P.C."/>
            <person name="Schrank A."/>
            <person name="Schrank I.S."/>
            <person name="Schuck A.F."/>
            <person name="Seuanez H.N."/>
            <person name="Silva D.W."/>
            <person name="Silva R."/>
            <person name="Silva S.C."/>
            <person name="Soares C.M.A."/>
            <person name="Souza K.R.L."/>
            <person name="Souza R.C."/>
            <person name="Staats C.C."/>
            <person name="Steffens M.B.R."/>
            <person name="Teixeira S.M.R."/>
            <person name="Urmenyi T.P."/>
            <person name="Vainstein M.H."/>
            <person name="Zuccherato L.W."/>
            <person name="Simpson A.J.G."/>
            <person name="Zaha A."/>
        </authorList>
    </citation>
    <scope>NUCLEOTIDE SEQUENCE [LARGE SCALE GENOMIC DNA]</scope>
    <source>
        <strain>7448</strain>
    </source>
</reference>
<gene>
    <name evidence="1" type="primary">ldh</name>
    <name type="ordered locus">MHP7448_0137</name>
</gene>
<accession>Q4A8M8</accession>
<protein>
    <recommendedName>
        <fullName evidence="1">L-lactate dehydrogenase</fullName>
        <shortName evidence="1">L-LDH</shortName>
        <ecNumber evidence="1">1.1.1.27</ecNumber>
    </recommendedName>
</protein>
<proteinExistence type="inferred from homology"/>
<dbReference type="EC" id="1.1.1.27" evidence="1"/>
<dbReference type="EMBL" id="AE017244">
    <property type="protein sequence ID" value="AAZ53511.1"/>
    <property type="molecule type" value="Genomic_DNA"/>
</dbReference>
<dbReference type="RefSeq" id="WP_011283934.1">
    <property type="nucleotide sequence ID" value="NC_007332.1"/>
</dbReference>
<dbReference type="SMR" id="Q4A8M8"/>
<dbReference type="KEGG" id="mhp:MHP7448_0137"/>
<dbReference type="HOGENOM" id="CLU_045401_1_2_14"/>
<dbReference type="UniPathway" id="UPA00554">
    <property type="reaction ID" value="UER00611"/>
</dbReference>
<dbReference type="Proteomes" id="UP000000553">
    <property type="component" value="Chromosome"/>
</dbReference>
<dbReference type="GO" id="GO:0005737">
    <property type="term" value="C:cytoplasm"/>
    <property type="evidence" value="ECO:0007669"/>
    <property type="project" value="UniProtKB-SubCell"/>
</dbReference>
<dbReference type="GO" id="GO:0004459">
    <property type="term" value="F:L-lactate dehydrogenase activity"/>
    <property type="evidence" value="ECO:0007669"/>
    <property type="project" value="UniProtKB-UniRule"/>
</dbReference>
<dbReference type="GO" id="GO:0006096">
    <property type="term" value="P:glycolytic process"/>
    <property type="evidence" value="ECO:0007669"/>
    <property type="project" value="UniProtKB-UniRule"/>
</dbReference>
<dbReference type="GO" id="GO:0006089">
    <property type="term" value="P:lactate metabolic process"/>
    <property type="evidence" value="ECO:0007669"/>
    <property type="project" value="TreeGrafter"/>
</dbReference>
<dbReference type="CDD" id="cd05291">
    <property type="entry name" value="HicDH_like"/>
    <property type="match status" value="1"/>
</dbReference>
<dbReference type="Gene3D" id="3.90.110.10">
    <property type="entry name" value="Lactate dehydrogenase/glycoside hydrolase, family 4, C-terminal"/>
    <property type="match status" value="1"/>
</dbReference>
<dbReference type="Gene3D" id="3.40.50.720">
    <property type="entry name" value="NAD(P)-binding Rossmann-like Domain"/>
    <property type="match status" value="1"/>
</dbReference>
<dbReference type="HAMAP" id="MF_00488">
    <property type="entry name" value="Lactate_dehydrog"/>
    <property type="match status" value="1"/>
</dbReference>
<dbReference type="InterPro" id="IPR001557">
    <property type="entry name" value="L-lactate/malate_DH"/>
</dbReference>
<dbReference type="InterPro" id="IPR011304">
    <property type="entry name" value="L-lactate_DH"/>
</dbReference>
<dbReference type="InterPro" id="IPR018177">
    <property type="entry name" value="L-lactate_DH_AS"/>
</dbReference>
<dbReference type="InterPro" id="IPR022383">
    <property type="entry name" value="Lactate/malate_DH_C"/>
</dbReference>
<dbReference type="InterPro" id="IPR001236">
    <property type="entry name" value="Lactate/malate_DH_N"/>
</dbReference>
<dbReference type="InterPro" id="IPR015955">
    <property type="entry name" value="Lactate_DH/Glyco_Ohase_4_C"/>
</dbReference>
<dbReference type="InterPro" id="IPR036291">
    <property type="entry name" value="NAD(P)-bd_dom_sf"/>
</dbReference>
<dbReference type="NCBIfam" id="TIGR01771">
    <property type="entry name" value="L-LDH-NAD"/>
    <property type="match status" value="1"/>
</dbReference>
<dbReference type="PANTHER" id="PTHR43128">
    <property type="entry name" value="L-2-HYDROXYCARBOXYLATE DEHYDROGENASE (NAD(P)(+))"/>
    <property type="match status" value="1"/>
</dbReference>
<dbReference type="PANTHER" id="PTHR43128:SF16">
    <property type="entry name" value="L-LACTATE DEHYDROGENASE"/>
    <property type="match status" value="1"/>
</dbReference>
<dbReference type="Pfam" id="PF02866">
    <property type="entry name" value="Ldh_1_C"/>
    <property type="match status" value="1"/>
</dbReference>
<dbReference type="Pfam" id="PF00056">
    <property type="entry name" value="Ldh_1_N"/>
    <property type="match status" value="1"/>
</dbReference>
<dbReference type="PIRSF" id="PIRSF000102">
    <property type="entry name" value="Lac_mal_DH"/>
    <property type="match status" value="1"/>
</dbReference>
<dbReference type="PRINTS" id="PR00086">
    <property type="entry name" value="LLDHDRGNASE"/>
</dbReference>
<dbReference type="SUPFAM" id="SSF56327">
    <property type="entry name" value="LDH C-terminal domain-like"/>
    <property type="match status" value="1"/>
</dbReference>
<dbReference type="SUPFAM" id="SSF51735">
    <property type="entry name" value="NAD(P)-binding Rossmann-fold domains"/>
    <property type="match status" value="1"/>
</dbReference>
<dbReference type="PROSITE" id="PS00064">
    <property type="entry name" value="L_LDH"/>
    <property type="match status" value="1"/>
</dbReference>
<keyword id="KW-0963">Cytoplasm</keyword>
<keyword id="KW-0520">NAD</keyword>
<keyword id="KW-0560">Oxidoreductase</keyword>
<keyword id="KW-0597">Phosphoprotein</keyword>
<comment type="function">
    <text evidence="1">Catalyzes the conversion of lactate to pyruvate.</text>
</comment>
<comment type="catalytic activity">
    <reaction evidence="1">
        <text>(S)-lactate + NAD(+) = pyruvate + NADH + H(+)</text>
        <dbReference type="Rhea" id="RHEA:23444"/>
        <dbReference type="ChEBI" id="CHEBI:15361"/>
        <dbReference type="ChEBI" id="CHEBI:15378"/>
        <dbReference type="ChEBI" id="CHEBI:16651"/>
        <dbReference type="ChEBI" id="CHEBI:57540"/>
        <dbReference type="ChEBI" id="CHEBI:57945"/>
        <dbReference type="EC" id="1.1.1.27"/>
    </reaction>
</comment>
<comment type="pathway">
    <text evidence="1">Fermentation; pyruvate fermentation to lactate; (S)-lactate from pyruvate: step 1/1.</text>
</comment>
<comment type="subunit">
    <text evidence="1">Homotetramer.</text>
</comment>
<comment type="subcellular location">
    <subcellularLocation>
        <location evidence="1">Cytoplasm</location>
    </subcellularLocation>
</comment>
<comment type="similarity">
    <text evidence="1">Belongs to the LDH/MDH superfamily. LDH family.</text>
</comment>
<organism>
    <name type="scientific">Mesomycoplasma hyopneumoniae (strain 7448)</name>
    <name type="common">Mycoplasma hyopneumoniae</name>
    <dbReference type="NCBI Taxonomy" id="262722"/>
    <lineage>
        <taxon>Bacteria</taxon>
        <taxon>Bacillati</taxon>
        <taxon>Mycoplasmatota</taxon>
        <taxon>Mycoplasmoidales</taxon>
        <taxon>Metamycoplasmataceae</taxon>
        <taxon>Mesomycoplasma</taxon>
    </lineage>
</organism>
<sequence length="315" mass="34238">MKPIKIALIGAGNVGNSFLYAAMNQGLASEYGIIDINPDFADGNAFDFEDASASLPFPISVSRYEYKDLKDADFIVITAGRPQKPGETRLELVADNIRIIREIALKVKESGFSGISIIVANPVDIITRAYRDASGFSDQKVIGSGTVLDTARLQFAIAKRAKVSPNSVQAYVMGEHGDSSFVAYSNIKIAGECFCAYSKLTGIDSSNYEKELEYPVSRRAYEIINRKRATFYGIGAAIAKIVSNIIKDTKNIMIAGANLRGEYGFHGVNIGVPVVLGANGIEKIIEISLNDKEKEKFAKSVAIIDKIYQDAIKNI</sequence>
<evidence type="ECO:0000255" key="1">
    <source>
        <dbReference type="HAMAP-Rule" id="MF_00488"/>
    </source>
</evidence>